<evidence type="ECO:0000250" key="1"/>
<evidence type="ECO:0000255" key="2">
    <source>
        <dbReference type="PROSITE-ProRule" id="PRU01057"/>
    </source>
</evidence>
<evidence type="ECO:0000305" key="3"/>
<name>GIMD1_HUMAN</name>
<gene>
    <name type="primary">GIMD1</name>
</gene>
<sequence>MTDPNKMIINLALFGMTQSGKSSAGNILLGSTDFHSSFAPCSVTTCCSLGRSCHLHSFMRRGGLEVALQVQVLDTPGYPHSRLSKKYVKQEVKEALAHHFGQGGLHLALLVQRADVPFCGQEVTDPVQMIQELLGHAWMNYTAILFTHAEKIEEAGLTEDKYLHEASDTLKTLLNSIQHKYVFQYKKGKSLNEQRMKILERIMEFIKENCYQVLTFK</sequence>
<organism>
    <name type="scientific">Homo sapiens</name>
    <name type="common">Human</name>
    <dbReference type="NCBI Taxonomy" id="9606"/>
    <lineage>
        <taxon>Eukaryota</taxon>
        <taxon>Metazoa</taxon>
        <taxon>Chordata</taxon>
        <taxon>Craniata</taxon>
        <taxon>Vertebrata</taxon>
        <taxon>Euteleostomi</taxon>
        <taxon>Mammalia</taxon>
        <taxon>Eutheria</taxon>
        <taxon>Euarchontoglires</taxon>
        <taxon>Primates</taxon>
        <taxon>Haplorrhini</taxon>
        <taxon>Catarrhini</taxon>
        <taxon>Hominidae</taxon>
        <taxon>Homo</taxon>
    </lineage>
</organism>
<comment type="similarity">
    <text evidence="3">Belongs to the TRAFAC class TrmE-Era-EngA-EngB-Septin-like GTPase superfamily. AIG1/Toc34/Toc159-like paraseptin GTPase family. IAN subfamily.</text>
</comment>
<reference key="1">
    <citation type="journal article" date="2005" name="Nature">
        <title>Generation and annotation of the DNA sequences of human chromosomes 2 and 4.</title>
        <authorList>
            <person name="Hillier L.W."/>
            <person name="Graves T.A."/>
            <person name="Fulton R.S."/>
            <person name="Fulton L.A."/>
            <person name="Pepin K.H."/>
            <person name="Minx P."/>
            <person name="Wagner-McPherson C."/>
            <person name="Layman D."/>
            <person name="Wylie K."/>
            <person name="Sekhon M."/>
            <person name="Becker M.C."/>
            <person name="Fewell G.A."/>
            <person name="Delehaunty K.D."/>
            <person name="Miner T.L."/>
            <person name="Nash W.E."/>
            <person name="Kremitzki C."/>
            <person name="Oddy L."/>
            <person name="Du H."/>
            <person name="Sun H."/>
            <person name="Bradshaw-Cordum H."/>
            <person name="Ali J."/>
            <person name="Carter J."/>
            <person name="Cordes M."/>
            <person name="Harris A."/>
            <person name="Isak A."/>
            <person name="van Brunt A."/>
            <person name="Nguyen C."/>
            <person name="Du F."/>
            <person name="Courtney L."/>
            <person name="Kalicki J."/>
            <person name="Ozersky P."/>
            <person name="Abbott S."/>
            <person name="Armstrong J."/>
            <person name="Belter E.A."/>
            <person name="Caruso L."/>
            <person name="Cedroni M."/>
            <person name="Cotton M."/>
            <person name="Davidson T."/>
            <person name="Desai A."/>
            <person name="Elliott G."/>
            <person name="Erb T."/>
            <person name="Fronick C."/>
            <person name="Gaige T."/>
            <person name="Haakenson W."/>
            <person name="Haglund K."/>
            <person name="Holmes A."/>
            <person name="Harkins R."/>
            <person name="Kim K."/>
            <person name="Kruchowski S.S."/>
            <person name="Strong C.M."/>
            <person name="Grewal N."/>
            <person name="Goyea E."/>
            <person name="Hou S."/>
            <person name="Levy A."/>
            <person name="Martinka S."/>
            <person name="Mead K."/>
            <person name="McLellan M.D."/>
            <person name="Meyer R."/>
            <person name="Randall-Maher J."/>
            <person name="Tomlinson C."/>
            <person name="Dauphin-Kohlberg S."/>
            <person name="Kozlowicz-Reilly A."/>
            <person name="Shah N."/>
            <person name="Swearengen-Shahid S."/>
            <person name="Snider J."/>
            <person name="Strong J.T."/>
            <person name="Thompson J."/>
            <person name="Yoakum M."/>
            <person name="Leonard S."/>
            <person name="Pearman C."/>
            <person name="Trani L."/>
            <person name="Radionenko M."/>
            <person name="Waligorski J.E."/>
            <person name="Wang C."/>
            <person name="Rock S.M."/>
            <person name="Tin-Wollam A.-M."/>
            <person name="Maupin R."/>
            <person name="Latreille P."/>
            <person name="Wendl M.C."/>
            <person name="Yang S.-P."/>
            <person name="Pohl C."/>
            <person name="Wallis J.W."/>
            <person name="Spieth J."/>
            <person name="Bieri T.A."/>
            <person name="Berkowicz N."/>
            <person name="Nelson J.O."/>
            <person name="Osborne J."/>
            <person name="Ding L."/>
            <person name="Meyer R."/>
            <person name="Sabo A."/>
            <person name="Shotland Y."/>
            <person name="Sinha P."/>
            <person name="Wohldmann P.E."/>
            <person name="Cook L.L."/>
            <person name="Hickenbotham M.T."/>
            <person name="Eldred J."/>
            <person name="Williams D."/>
            <person name="Jones T.A."/>
            <person name="She X."/>
            <person name="Ciccarelli F.D."/>
            <person name="Izaurralde E."/>
            <person name="Taylor J."/>
            <person name="Schmutz J."/>
            <person name="Myers R.M."/>
            <person name="Cox D.R."/>
            <person name="Huang X."/>
            <person name="McPherson J.D."/>
            <person name="Mardis E.R."/>
            <person name="Clifton S.W."/>
            <person name="Warren W.C."/>
            <person name="Chinwalla A.T."/>
            <person name="Eddy S.R."/>
            <person name="Marra M.A."/>
            <person name="Ovcharenko I."/>
            <person name="Furey T.S."/>
            <person name="Miller W."/>
            <person name="Eichler E.E."/>
            <person name="Bork P."/>
            <person name="Suyama M."/>
            <person name="Torrents D."/>
            <person name="Waterston R.H."/>
            <person name="Wilson R.K."/>
        </authorList>
    </citation>
    <scope>NUCLEOTIDE SEQUENCE [LARGE SCALE GENOMIC DNA]</scope>
</reference>
<reference key="2">
    <citation type="submission" date="2005-04" db="EMBL/GenBank/DDBJ databases">
        <title>Exhaustive RT-PCR and sequencing of all novel TWINSCAN predictions in human.</title>
        <authorList>
            <person name="Stevens M."/>
            <person name="Wei C."/>
            <person name="Gross S.S."/>
            <person name="McPherson J."/>
            <person name="Brent M.R."/>
        </authorList>
    </citation>
    <scope>NUCLEOTIDE SEQUENCE [LARGE SCALE MRNA] OF 79-146</scope>
</reference>
<accession>P0DJR0</accession>
<protein>
    <recommendedName>
        <fullName>GTPase IMAP family member GIMD1</fullName>
    </recommendedName>
    <alternativeName>
        <fullName>GIMAP family P-loop NTPase domain-containing protein 1</fullName>
    </alternativeName>
</protein>
<proteinExistence type="evidence at protein level"/>
<feature type="chain" id="PRO_0000419199" description="GTPase IMAP family member GIMD1">
    <location>
        <begin position="1"/>
        <end position="217"/>
    </location>
</feature>
<feature type="domain" description="AIG1-type G" evidence="2">
    <location>
        <begin position="6"/>
        <end position="217"/>
    </location>
</feature>
<feature type="binding site" evidence="1">
    <location>
        <begin position="15"/>
        <end position="23"/>
    </location>
    <ligand>
        <name>GTP</name>
        <dbReference type="ChEBI" id="CHEBI:37565"/>
    </ligand>
</feature>
<feature type="binding site" evidence="1">
    <location>
        <position position="36"/>
    </location>
    <ligand>
        <name>GTP</name>
        <dbReference type="ChEBI" id="CHEBI:37565"/>
    </ligand>
</feature>
<feature type="binding site" evidence="1">
    <location>
        <begin position="148"/>
        <end position="150"/>
    </location>
    <ligand>
        <name>GTP</name>
        <dbReference type="ChEBI" id="CHEBI:37565"/>
    </ligand>
</feature>
<keyword id="KW-0342">GTP-binding</keyword>
<keyword id="KW-0547">Nucleotide-binding</keyword>
<keyword id="KW-1267">Proteomics identification</keyword>
<keyword id="KW-1185">Reference proteome</keyword>
<dbReference type="EMBL" id="AC093680">
    <property type="status" value="NOT_ANNOTATED_CDS"/>
    <property type="molecule type" value="Genomic_DNA"/>
</dbReference>
<dbReference type="EMBL" id="DN831977">
    <property type="status" value="NOT_ANNOTATED_CDS"/>
    <property type="molecule type" value="mRNA"/>
</dbReference>
<dbReference type="CCDS" id="CCDS82942.1"/>
<dbReference type="RefSeq" id="NP_001182067.1">
    <property type="nucleotide sequence ID" value="NM_001195138.2"/>
</dbReference>
<dbReference type="SMR" id="P0DJR0"/>
<dbReference type="GlyGen" id="P0DJR0">
    <property type="glycosylation" value="1 site, 1 O-linked glycan (1 site)"/>
</dbReference>
<dbReference type="iPTMnet" id="P0DJR0"/>
<dbReference type="PhosphoSitePlus" id="P0DJR0"/>
<dbReference type="BioMuta" id="GIMD1"/>
<dbReference type="DMDM" id="408407619"/>
<dbReference type="MassIVE" id="P0DJR0"/>
<dbReference type="PeptideAtlas" id="P0DJR0"/>
<dbReference type="DNASU" id="100507096"/>
<dbReference type="Ensembl" id="ENST00000507153.2">
    <property type="protein sequence ID" value="ENSP00000489975.1"/>
    <property type="gene ID" value="ENSG00000250298.6"/>
</dbReference>
<dbReference type="Ensembl" id="ENST00000638719.4">
    <property type="protein sequence ID" value="ENSP00000491450.2"/>
    <property type="gene ID" value="ENSG00000250298.6"/>
</dbReference>
<dbReference type="GeneID" id="100507096"/>
<dbReference type="KEGG" id="hsa:100507096"/>
<dbReference type="MANE-Select" id="ENST00000638719.4">
    <property type="protein sequence ID" value="ENSP00000491450.2"/>
    <property type="RefSeq nucleotide sequence ID" value="NM_001195138.2"/>
    <property type="RefSeq protein sequence ID" value="NP_001182067.1"/>
</dbReference>
<dbReference type="AGR" id="HGNC:44141"/>
<dbReference type="CTD" id="100507096"/>
<dbReference type="GeneCards" id="GIMD1"/>
<dbReference type="HGNC" id="HGNC:44141">
    <property type="gene designation" value="GIMD1"/>
</dbReference>
<dbReference type="HPA" id="ENSG00000250298">
    <property type="expression patterns" value="Tissue enriched (intestine)"/>
</dbReference>
<dbReference type="neXtProt" id="NX_P0DJR0"/>
<dbReference type="OpenTargets" id="ENSG00000250298"/>
<dbReference type="VEuPathDB" id="HostDB:ENSG00000250298"/>
<dbReference type="GeneTree" id="ENSGT00530000069080"/>
<dbReference type="InParanoid" id="P0DJR0"/>
<dbReference type="OMA" id="GKAMTDP"/>
<dbReference type="OrthoDB" id="8954335at2759"/>
<dbReference type="PAN-GO" id="P0DJR0">
    <property type="GO annotations" value="0 GO annotations based on evolutionary models"/>
</dbReference>
<dbReference type="BioGRID-ORCS" id="100507096">
    <property type="hits" value="15 hits in 240 CRISPR screens"/>
</dbReference>
<dbReference type="Pharos" id="P0DJR0">
    <property type="development level" value="Tdark"/>
</dbReference>
<dbReference type="PRO" id="PR:P0DJR0"/>
<dbReference type="Proteomes" id="UP000005640">
    <property type="component" value="Chromosome 4"/>
</dbReference>
<dbReference type="RNAct" id="P0DJR0">
    <property type="molecule type" value="protein"/>
</dbReference>
<dbReference type="Bgee" id="ENSG00000250298">
    <property type="expression patterns" value="Expressed in duodenum and 9 other cell types or tissues"/>
</dbReference>
<dbReference type="GO" id="GO:0005525">
    <property type="term" value="F:GTP binding"/>
    <property type="evidence" value="ECO:0007669"/>
    <property type="project" value="UniProtKB-KW"/>
</dbReference>
<dbReference type="FunFam" id="3.40.50.300:FF:001392">
    <property type="entry name" value="GTPase IMAP family member GIMD1"/>
    <property type="match status" value="1"/>
</dbReference>
<dbReference type="Gene3D" id="3.40.50.300">
    <property type="entry name" value="P-loop containing nucleotide triphosphate hydrolases"/>
    <property type="match status" value="1"/>
</dbReference>
<dbReference type="InterPro" id="IPR006703">
    <property type="entry name" value="G_AIG1"/>
</dbReference>
<dbReference type="InterPro" id="IPR045058">
    <property type="entry name" value="GIMA/IAN/Toc"/>
</dbReference>
<dbReference type="InterPro" id="IPR027417">
    <property type="entry name" value="P-loop_NTPase"/>
</dbReference>
<dbReference type="PANTHER" id="PTHR10903:SF103">
    <property type="entry name" value="GTPASE IMAP FAMILY MEMBER GIMD1"/>
    <property type="match status" value="1"/>
</dbReference>
<dbReference type="PANTHER" id="PTHR10903">
    <property type="entry name" value="GTPASE, IMAP FAMILY MEMBER-RELATED"/>
    <property type="match status" value="1"/>
</dbReference>
<dbReference type="Pfam" id="PF04548">
    <property type="entry name" value="AIG1"/>
    <property type="match status" value="1"/>
</dbReference>
<dbReference type="SUPFAM" id="SSF52540">
    <property type="entry name" value="P-loop containing nucleoside triphosphate hydrolases"/>
    <property type="match status" value="1"/>
</dbReference>
<dbReference type="PROSITE" id="PS51720">
    <property type="entry name" value="G_AIG1"/>
    <property type="match status" value="1"/>
</dbReference>